<evidence type="ECO:0000255" key="1">
    <source>
        <dbReference type="HAMAP-Rule" id="MF_00672"/>
    </source>
</evidence>
<name>Y4136_KLEP7</name>
<proteinExistence type="inferred from homology"/>
<reference key="1">
    <citation type="submission" date="2006-09" db="EMBL/GenBank/DDBJ databases">
        <authorList>
            <consortium name="The Klebsiella pneumonia Genome Sequencing Project"/>
            <person name="McClelland M."/>
            <person name="Sanderson E.K."/>
            <person name="Spieth J."/>
            <person name="Clifton W.S."/>
            <person name="Latreille P."/>
            <person name="Sabo A."/>
            <person name="Pepin K."/>
            <person name="Bhonagiri V."/>
            <person name="Porwollik S."/>
            <person name="Ali J."/>
            <person name="Wilson R.K."/>
        </authorList>
    </citation>
    <scope>NUCLEOTIDE SEQUENCE [LARGE SCALE GENOMIC DNA]</scope>
    <source>
        <strain>ATCC 700721 / MGH 78578</strain>
    </source>
</reference>
<gene>
    <name type="ordered locus">KPN78578_41360</name>
    <name type="ORF">KPN_04181</name>
</gene>
<feature type="chain" id="PRO_1000044720" description="UPF0761 membrane protein KPN78578_41360">
    <location>
        <begin position="1"/>
        <end position="286"/>
    </location>
</feature>
<feature type="transmembrane region" description="Helical" evidence="1">
    <location>
        <begin position="44"/>
        <end position="64"/>
    </location>
</feature>
<feature type="transmembrane region" description="Helical" evidence="1">
    <location>
        <begin position="74"/>
        <end position="94"/>
    </location>
</feature>
<feature type="transmembrane region" description="Helical" evidence="1">
    <location>
        <begin position="104"/>
        <end position="124"/>
    </location>
</feature>
<feature type="transmembrane region" description="Helical" evidence="1">
    <location>
        <begin position="140"/>
        <end position="160"/>
    </location>
</feature>
<feature type="transmembrane region" description="Helical" evidence="1">
    <location>
        <begin position="183"/>
        <end position="203"/>
    </location>
</feature>
<feature type="transmembrane region" description="Helical" evidence="1">
    <location>
        <begin position="210"/>
        <end position="230"/>
    </location>
</feature>
<feature type="transmembrane region" description="Helical" evidence="1">
    <location>
        <begin position="244"/>
        <end position="264"/>
    </location>
</feature>
<keyword id="KW-0997">Cell inner membrane</keyword>
<keyword id="KW-1003">Cell membrane</keyword>
<keyword id="KW-0472">Membrane</keyword>
<keyword id="KW-0812">Transmembrane</keyword>
<keyword id="KW-1133">Transmembrane helix</keyword>
<comment type="subcellular location">
    <subcellularLocation>
        <location evidence="1">Cell inner membrane</location>
        <topology evidence="1">Multi-pass membrane protein</topology>
    </subcellularLocation>
</comment>
<comment type="similarity">
    <text evidence="1">Belongs to the UPF0761 family.</text>
</comment>
<accession>A6TG76</accession>
<organism>
    <name type="scientific">Klebsiella pneumoniae subsp. pneumoniae (strain ATCC 700721 / MGH 78578)</name>
    <dbReference type="NCBI Taxonomy" id="272620"/>
    <lineage>
        <taxon>Bacteria</taxon>
        <taxon>Pseudomonadati</taxon>
        <taxon>Pseudomonadota</taxon>
        <taxon>Gammaproteobacteria</taxon>
        <taxon>Enterobacterales</taxon>
        <taxon>Enterobacteriaceae</taxon>
        <taxon>Klebsiella/Raoultella group</taxon>
        <taxon>Klebsiella</taxon>
        <taxon>Klebsiella pneumoniae complex</taxon>
    </lineage>
</organism>
<dbReference type="EMBL" id="CP000647">
    <property type="protein sequence ID" value="ABR79560.1"/>
    <property type="molecule type" value="Genomic_DNA"/>
</dbReference>
<dbReference type="RefSeq" id="WP_004146232.1">
    <property type="nucleotide sequence ID" value="NC_009648.1"/>
</dbReference>
<dbReference type="SMR" id="A6TG76"/>
<dbReference type="STRING" id="272620.KPN_04181"/>
<dbReference type="PaxDb" id="272620-KPN_04181"/>
<dbReference type="DNASU" id="5342643"/>
<dbReference type="EnsemblBacteria" id="ABR79560">
    <property type="protein sequence ID" value="ABR79560"/>
    <property type="gene ID" value="KPN_04181"/>
</dbReference>
<dbReference type="KEGG" id="kpn:KPN_04181"/>
<dbReference type="HOGENOM" id="CLU_032288_0_0_6"/>
<dbReference type="Proteomes" id="UP000000265">
    <property type="component" value="Chromosome"/>
</dbReference>
<dbReference type="GO" id="GO:0005886">
    <property type="term" value="C:plasma membrane"/>
    <property type="evidence" value="ECO:0007669"/>
    <property type="project" value="UniProtKB-SubCell"/>
</dbReference>
<dbReference type="HAMAP" id="MF_00672">
    <property type="entry name" value="UPF0761"/>
    <property type="match status" value="1"/>
</dbReference>
<dbReference type="InterPro" id="IPR023679">
    <property type="entry name" value="UPF0761_bac"/>
</dbReference>
<dbReference type="InterPro" id="IPR017039">
    <property type="entry name" value="Virul_fac_BrkB"/>
</dbReference>
<dbReference type="NCBIfam" id="NF002457">
    <property type="entry name" value="PRK01637.1"/>
    <property type="match status" value="1"/>
</dbReference>
<dbReference type="NCBIfam" id="TIGR00765">
    <property type="entry name" value="yihY_not_rbn"/>
    <property type="match status" value="1"/>
</dbReference>
<dbReference type="PANTHER" id="PTHR30213">
    <property type="entry name" value="INNER MEMBRANE PROTEIN YHJD"/>
    <property type="match status" value="1"/>
</dbReference>
<dbReference type="PANTHER" id="PTHR30213:SF0">
    <property type="entry name" value="UPF0761 MEMBRANE PROTEIN YIHY"/>
    <property type="match status" value="1"/>
</dbReference>
<dbReference type="Pfam" id="PF03631">
    <property type="entry name" value="Virul_fac_BrkB"/>
    <property type="match status" value="1"/>
</dbReference>
<dbReference type="PIRSF" id="PIRSF035875">
    <property type="entry name" value="RNase_BN"/>
    <property type="match status" value="1"/>
</dbReference>
<sequence>MLKTVHQKLLHHTRPLLAWLKLLWRRIDEDHMTTLAGNLAYVSLLSLVPLIAVVFALFAAFPMFSEVSVQIRHFIFANFIPATGDVIQGYIEQFVANSSRMTAVGAFGLIVTSLLLMYSIDSALNTIWRSTRSRPKVYSFAVYWMILTLGPLLAGASLAISSYLLSLRWASDLDGVIDNLLRLFPLILSWAAFWLLYSIVPTTQVRNRDAVIGALVAALLFEAGKKAFALYITTFPSYQLIYGVISVVPILFVWVYWTWCIVLLGAEITVTLGEYRKLKTEETEQP</sequence>
<protein>
    <recommendedName>
        <fullName evidence="1">UPF0761 membrane protein KPN78578_41360</fullName>
    </recommendedName>
</protein>